<accession>Q41183</accession>
<organism>
    <name type="scientific">Dactylis glomerata</name>
    <name type="common">Orchard grass</name>
    <name type="synonym">Cock's-foot grass</name>
    <dbReference type="NCBI Taxonomy" id="4509"/>
    <lineage>
        <taxon>Eukaryota</taxon>
        <taxon>Viridiplantae</taxon>
        <taxon>Streptophyta</taxon>
        <taxon>Embryophyta</taxon>
        <taxon>Tracheophyta</taxon>
        <taxon>Spermatophyta</taxon>
        <taxon>Magnoliopsida</taxon>
        <taxon>Liliopsida</taxon>
        <taxon>Poales</taxon>
        <taxon>Poaceae</taxon>
        <taxon>BOP clade</taxon>
        <taxon>Pooideae</taxon>
        <taxon>Poodae</taxon>
        <taxon>Poeae</taxon>
        <taxon>Poeae Chloroplast Group 2 (Poeae type)</taxon>
        <taxon>Loliodinae</taxon>
        <taxon>Dactylidinae</taxon>
        <taxon>Dactylis</taxon>
    </lineage>
</organism>
<evidence type="ECO:0000305" key="1"/>
<keyword id="KW-0020">Allergen</keyword>
<keyword id="KW-0964">Secreted</keyword>
<dbReference type="EMBL" id="S45354">
    <property type="protein sequence ID" value="AAB23303.1"/>
    <property type="status" value="ALT_TERM"/>
    <property type="molecule type" value="mRNA"/>
</dbReference>
<dbReference type="SMR" id="Q41183"/>
<dbReference type="Allergome" id="283">
    <property type="allergen name" value="Dac g 2"/>
</dbReference>
<dbReference type="Allergome" id="3240">
    <property type="allergen name" value="Dac g 2.0101"/>
</dbReference>
<dbReference type="GO" id="GO:0005576">
    <property type="term" value="C:extracellular region"/>
    <property type="evidence" value="ECO:0007669"/>
    <property type="project" value="UniProtKB-SubCell"/>
</dbReference>
<feature type="chain" id="PRO_0000154570" description="Pollen allergen Dac g 2">
    <location>
        <begin position="1" status="less than"/>
        <end position="36" status="greater than"/>
    </location>
</feature>
<feature type="non-terminal residue">
    <location>
        <position position="1"/>
    </location>
</feature>
<feature type="non-terminal residue">
    <location>
        <position position="36"/>
    </location>
</feature>
<sequence length="36" mass="3971">EAPVTFTVEKGSDEKNLALSIKYNKEGDSMAEVELK</sequence>
<name>MPAG2_DACGL</name>
<comment type="subcellular location">
    <subcellularLocation>
        <location>Secreted</location>
    </subcellularLocation>
</comment>
<comment type="allergen">
    <text>Causes an allergic reaction in human. Causes grass pollen allergy. Binds to IgE.</text>
</comment>
<comment type="similarity">
    <text evidence="1">Belongs to the expansin family. Expansin B subfamily.</text>
</comment>
<reference key="1">
    <citation type="journal article" date="1992" name="Immunology">
        <title>Recombinant pollen allergens from Dactylis glomerata: preliminary evidence that human IgE cross-reactivity between Dac g II and Lol p I/II is increased following grass pollen immunotherapy.</title>
        <authorList>
            <person name="Roberts A.M."/>
            <person name="van Ree R."/>
            <person name="Cardy S.M."/>
            <person name="Bevan L.J."/>
            <person name="Walker M.R."/>
        </authorList>
    </citation>
    <scope>NUCLEOTIDE SEQUENCE [MRNA]</scope>
</reference>
<proteinExistence type="evidence at protein level"/>
<protein>
    <recommendedName>
        <fullName>Pollen allergen Dac g 2</fullName>
    </recommendedName>
    <alternativeName>
        <fullName>Allergen Dac g II</fullName>
    </alternativeName>
    <allergenName>Dac g 2</allergenName>
</protein>